<organism>
    <name type="scientific">Lactobacillus delbrueckii subsp. bulgaricus (strain ATCC 11842 / DSM 20081 / BCRC 10696 / JCM 1002 / NBRC 13953 / NCIMB 11778 / NCTC 12712 / WDCM 00102 / Lb 14)</name>
    <dbReference type="NCBI Taxonomy" id="390333"/>
    <lineage>
        <taxon>Bacteria</taxon>
        <taxon>Bacillati</taxon>
        <taxon>Bacillota</taxon>
        <taxon>Bacilli</taxon>
        <taxon>Lactobacillales</taxon>
        <taxon>Lactobacillaceae</taxon>
        <taxon>Lactobacillus</taxon>
    </lineage>
</organism>
<protein>
    <recommendedName>
        <fullName evidence="1">Chaperonin GroEL</fullName>
        <ecNumber evidence="1">5.6.1.7</ecNumber>
    </recommendedName>
    <alternativeName>
        <fullName evidence="1">60 kDa chaperonin</fullName>
    </alternativeName>
    <alternativeName>
        <fullName evidence="1">Chaperonin-60</fullName>
        <shortName evidence="1">Cpn60</shortName>
    </alternativeName>
</protein>
<dbReference type="EC" id="5.6.1.7" evidence="1"/>
<dbReference type="EMBL" id="CR954253">
    <property type="protein sequence ID" value="CAI98406.1"/>
    <property type="molecule type" value="Genomic_DNA"/>
</dbReference>
<dbReference type="RefSeq" id="WP_003619546.1">
    <property type="nucleotide sequence ID" value="NZ_JQAV01000002.1"/>
</dbReference>
<dbReference type="SMR" id="Q1G937"/>
<dbReference type="STRING" id="390333.Ldb1617"/>
<dbReference type="KEGG" id="ldb:Ldb1617"/>
<dbReference type="PATRIC" id="fig|390333.13.peg.1006"/>
<dbReference type="eggNOG" id="COG0459">
    <property type="taxonomic scope" value="Bacteria"/>
</dbReference>
<dbReference type="HOGENOM" id="CLU_016503_3_0_9"/>
<dbReference type="BioCyc" id="LDEL390333:LDB_RS06990-MONOMER"/>
<dbReference type="Proteomes" id="UP000001259">
    <property type="component" value="Chromosome"/>
</dbReference>
<dbReference type="GO" id="GO:0005737">
    <property type="term" value="C:cytoplasm"/>
    <property type="evidence" value="ECO:0007669"/>
    <property type="project" value="UniProtKB-SubCell"/>
</dbReference>
<dbReference type="GO" id="GO:0005524">
    <property type="term" value="F:ATP binding"/>
    <property type="evidence" value="ECO:0007669"/>
    <property type="project" value="UniProtKB-UniRule"/>
</dbReference>
<dbReference type="GO" id="GO:0140662">
    <property type="term" value="F:ATP-dependent protein folding chaperone"/>
    <property type="evidence" value="ECO:0007669"/>
    <property type="project" value="InterPro"/>
</dbReference>
<dbReference type="GO" id="GO:0016853">
    <property type="term" value="F:isomerase activity"/>
    <property type="evidence" value="ECO:0007669"/>
    <property type="project" value="UniProtKB-KW"/>
</dbReference>
<dbReference type="GO" id="GO:0051082">
    <property type="term" value="F:unfolded protein binding"/>
    <property type="evidence" value="ECO:0007669"/>
    <property type="project" value="UniProtKB-UniRule"/>
</dbReference>
<dbReference type="GO" id="GO:0042026">
    <property type="term" value="P:protein refolding"/>
    <property type="evidence" value="ECO:0007669"/>
    <property type="project" value="UniProtKB-UniRule"/>
</dbReference>
<dbReference type="CDD" id="cd03344">
    <property type="entry name" value="GroEL"/>
    <property type="match status" value="1"/>
</dbReference>
<dbReference type="FunFam" id="3.50.7.10:FF:000001">
    <property type="entry name" value="60 kDa chaperonin"/>
    <property type="match status" value="1"/>
</dbReference>
<dbReference type="Gene3D" id="3.50.7.10">
    <property type="entry name" value="GroEL"/>
    <property type="match status" value="1"/>
</dbReference>
<dbReference type="Gene3D" id="1.10.560.10">
    <property type="entry name" value="GroEL-like equatorial domain"/>
    <property type="match status" value="1"/>
</dbReference>
<dbReference type="Gene3D" id="3.30.260.10">
    <property type="entry name" value="TCP-1-like chaperonin intermediate domain"/>
    <property type="match status" value="1"/>
</dbReference>
<dbReference type="HAMAP" id="MF_00600">
    <property type="entry name" value="CH60"/>
    <property type="match status" value="1"/>
</dbReference>
<dbReference type="InterPro" id="IPR018370">
    <property type="entry name" value="Chaperonin_Cpn60_CS"/>
</dbReference>
<dbReference type="InterPro" id="IPR001844">
    <property type="entry name" value="Cpn60/GroEL"/>
</dbReference>
<dbReference type="InterPro" id="IPR002423">
    <property type="entry name" value="Cpn60/GroEL/TCP-1"/>
</dbReference>
<dbReference type="InterPro" id="IPR027409">
    <property type="entry name" value="GroEL-like_apical_dom_sf"/>
</dbReference>
<dbReference type="InterPro" id="IPR027413">
    <property type="entry name" value="GROEL-like_equatorial_sf"/>
</dbReference>
<dbReference type="InterPro" id="IPR027410">
    <property type="entry name" value="TCP-1-like_intermed_sf"/>
</dbReference>
<dbReference type="NCBIfam" id="TIGR02348">
    <property type="entry name" value="GroEL"/>
    <property type="match status" value="1"/>
</dbReference>
<dbReference type="NCBIfam" id="NF000592">
    <property type="entry name" value="PRK00013.1"/>
    <property type="match status" value="1"/>
</dbReference>
<dbReference type="NCBIfam" id="NF009487">
    <property type="entry name" value="PRK12849.1"/>
    <property type="match status" value="1"/>
</dbReference>
<dbReference type="NCBIfam" id="NF009488">
    <property type="entry name" value="PRK12850.1"/>
    <property type="match status" value="1"/>
</dbReference>
<dbReference type="NCBIfam" id="NF009489">
    <property type="entry name" value="PRK12851.1"/>
    <property type="match status" value="1"/>
</dbReference>
<dbReference type="PANTHER" id="PTHR45633">
    <property type="entry name" value="60 KDA HEAT SHOCK PROTEIN, MITOCHONDRIAL"/>
    <property type="match status" value="1"/>
</dbReference>
<dbReference type="Pfam" id="PF00118">
    <property type="entry name" value="Cpn60_TCP1"/>
    <property type="match status" value="1"/>
</dbReference>
<dbReference type="PRINTS" id="PR00298">
    <property type="entry name" value="CHAPERONIN60"/>
</dbReference>
<dbReference type="SUPFAM" id="SSF52029">
    <property type="entry name" value="GroEL apical domain-like"/>
    <property type="match status" value="1"/>
</dbReference>
<dbReference type="SUPFAM" id="SSF48592">
    <property type="entry name" value="GroEL equatorial domain-like"/>
    <property type="match status" value="1"/>
</dbReference>
<dbReference type="SUPFAM" id="SSF54849">
    <property type="entry name" value="GroEL-intermediate domain like"/>
    <property type="match status" value="1"/>
</dbReference>
<dbReference type="PROSITE" id="PS00296">
    <property type="entry name" value="CHAPERONINS_CPN60"/>
    <property type="match status" value="1"/>
</dbReference>
<evidence type="ECO:0000255" key="1">
    <source>
        <dbReference type="HAMAP-Rule" id="MF_00600"/>
    </source>
</evidence>
<keyword id="KW-0067">ATP-binding</keyword>
<keyword id="KW-0143">Chaperone</keyword>
<keyword id="KW-0963">Cytoplasm</keyword>
<keyword id="KW-0413">Isomerase</keyword>
<keyword id="KW-0547">Nucleotide-binding</keyword>
<keyword id="KW-1185">Reference proteome</keyword>
<comment type="function">
    <text evidence="1">Together with its co-chaperonin GroES, plays an essential role in assisting protein folding. The GroEL-GroES system forms a nano-cage that allows encapsulation of the non-native substrate proteins and provides a physical environment optimized to promote and accelerate protein folding.</text>
</comment>
<comment type="catalytic activity">
    <reaction evidence="1">
        <text>ATP + H2O + a folded polypeptide = ADP + phosphate + an unfolded polypeptide.</text>
        <dbReference type="EC" id="5.6.1.7"/>
    </reaction>
</comment>
<comment type="subunit">
    <text evidence="1">Forms a cylinder of 14 subunits composed of two heptameric rings stacked back-to-back. Interacts with the co-chaperonin GroES.</text>
</comment>
<comment type="subcellular location">
    <subcellularLocation>
        <location evidence="1">Cytoplasm</location>
    </subcellularLocation>
</comment>
<comment type="similarity">
    <text evidence="1">Belongs to the chaperonin (HSP60) family.</text>
</comment>
<accession>Q1G937</accession>
<feature type="chain" id="PRO_0000256920" description="Chaperonin GroEL">
    <location>
        <begin position="1"/>
        <end position="537"/>
    </location>
</feature>
<feature type="binding site" evidence="1">
    <location>
        <begin position="29"/>
        <end position="32"/>
    </location>
    <ligand>
        <name>ATP</name>
        <dbReference type="ChEBI" id="CHEBI:30616"/>
    </ligand>
</feature>
<feature type="binding site" evidence="1">
    <location>
        <begin position="86"/>
        <end position="90"/>
    </location>
    <ligand>
        <name>ATP</name>
        <dbReference type="ChEBI" id="CHEBI:30616"/>
    </ligand>
</feature>
<feature type="binding site" evidence="1">
    <location>
        <position position="413"/>
    </location>
    <ligand>
        <name>ATP</name>
        <dbReference type="ChEBI" id="CHEBI:30616"/>
    </ligand>
</feature>
<feature type="binding site" evidence="1">
    <location>
        <begin position="477"/>
        <end position="479"/>
    </location>
    <ligand>
        <name>ATP</name>
        <dbReference type="ChEBI" id="CHEBI:30616"/>
    </ligand>
</feature>
<feature type="binding site" evidence="1">
    <location>
        <position position="493"/>
    </location>
    <ligand>
        <name>ATP</name>
        <dbReference type="ChEBI" id="CHEBI:30616"/>
    </ligand>
</feature>
<proteinExistence type="inferred from homology"/>
<name>CH60_LACDA</name>
<gene>
    <name evidence="1" type="primary">groEL</name>
    <name evidence="1" type="synonym">groL</name>
    <name type="ordered locus">Ldb1617</name>
</gene>
<sequence>MAKDIKFSEDARRSLLNGVNKLANTVKTTLGPKGRNVVLEQSYGAPTITNDGVTIAKAIELEDHYENIGAKLVAEAASKTNDIAGDGTTTATVLTQAIVQEGMKNVVAGANPVGIRRGIEKATKAAVDQLHKNSHKVSSRDQIAQVASISSASKEIGDLIAEAMEKVGKDGVITIEDSRGIETELSVVEGMQFDRGYLSQYMVTDNDKMEADLENPYILITDKKISNIQDILPMLQEIVQQGRSLLIIADDVTGEALPTLVLNKIRGTFNVVAVKAPGFGDRRKEQLADIAALTGGTVISEDLGLELKDTQLSQLGQARRVTITKDSTTIVDGSGAKEAIQERVDTIRKQIEDTSSDFDKKKLQERLAKLTGGVAVIHVGAATETELKERRYRVEDALNATRAAVDEGYVAGGGTALVNVEEAVKATKGDTDDEQTGINIVARALTAPVRQIAENAGQEGSVVVDHLRKVDPEVGYNAAEDKYVNMIDEGIIDPTQVTRSALQNAASIAGLLLTTEAVVAEIPEDKPEAAPAQPGMM</sequence>
<reference key="1">
    <citation type="journal article" date="2006" name="Proc. Natl. Acad. Sci. U.S.A.">
        <title>The complete genome sequence of Lactobacillus bulgaricus reveals extensive and ongoing reductive evolution.</title>
        <authorList>
            <person name="van de Guchte M."/>
            <person name="Penaud S."/>
            <person name="Grimaldi C."/>
            <person name="Barbe V."/>
            <person name="Bryson K."/>
            <person name="Nicolas P."/>
            <person name="Robert C."/>
            <person name="Oztas S."/>
            <person name="Mangenot S."/>
            <person name="Couloux A."/>
            <person name="Loux V."/>
            <person name="Dervyn R."/>
            <person name="Bossy R."/>
            <person name="Bolotin A."/>
            <person name="Batto J.-M."/>
            <person name="Walunas T."/>
            <person name="Gibrat J.-F."/>
            <person name="Bessieres P."/>
            <person name="Weissenbach J."/>
            <person name="Ehrlich S.D."/>
            <person name="Maguin E."/>
        </authorList>
    </citation>
    <scope>NUCLEOTIDE SEQUENCE [LARGE SCALE GENOMIC DNA]</scope>
    <source>
        <strain>ATCC 11842 / DSM 20081 / BCRC 10696 / JCM 1002 / NBRC 13953 / NCIMB 11778 / NCTC 12712 / WDCM 00102 / Lb 14</strain>
    </source>
</reference>